<name>OBG_ACIBS</name>
<protein>
    <recommendedName>
        <fullName evidence="1">GTPase Obg</fullName>
        <ecNumber evidence="1">3.6.5.-</ecNumber>
    </recommendedName>
    <alternativeName>
        <fullName evidence="1">GTP-binding protein Obg</fullName>
    </alternativeName>
</protein>
<evidence type="ECO:0000255" key="1">
    <source>
        <dbReference type="HAMAP-Rule" id="MF_01454"/>
    </source>
</evidence>
<evidence type="ECO:0000255" key="2">
    <source>
        <dbReference type="PROSITE-ProRule" id="PRU01231"/>
    </source>
</evidence>
<evidence type="ECO:0000256" key="3">
    <source>
        <dbReference type="SAM" id="MobiDB-lite"/>
    </source>
</evidence>
<proteinExistence type="inferred from homology"/>
<dbReference type="EC" id="3.6.5.-" evidence="1"/>
<dbReference type="EMBL" id="CU468230">
    <property type="protein sequence ID" value="CAP00338.1"/>
    <property type="molecule type" value="Genomic_DNA"/>
</dbReference>
<dbReference type="SMR" id="B0VTQ1"/>
<dbReference type="KEGG" id="abm:ABSDF0979"/>
<dbReference type="HOGENOM" id="CLU_011747_2_0_6"/>
<dbReference type="Proteomes" id="UP000001741">
    <property type="component" value="Chromosome"/>
</dbReference>
<dbReference type="GO" id="GO:0005737">
    <property type="term" value="C:cytoplasm"/>
    <property type="evidence" value="ECO:0007669"/>
    <property type="project" value="UniProtKB-SubCell"/>
</dbReference>
<dbReference type="GO" id="GO:0005525">
    <property type="term" value="F:GTP binding"/>
    <property type="evidence" value="ECO:0007669"/>
    <property type="project" value="UniProtKB-UniRule"/>
</dbReference>
<dbReference type="GO" id="GO:0003924">
    <property type="term" value="F:GTPase activity"/>
    <property type="evidence" value="ECO:0007669"/>
    <property type="project" value="UniProtKB-UniRule"/>
</dbReference>
<dbReference type="GO" id="GO:0000287">
    <property type="term" value="F:magnesium ion binding"/>
    <property type="evidence" value="ECO:0007669"/>
    <property type="project" value="InterPro"/>
</dbReference>
<dbReference type="GO" id="GO:0042254">
    <property type="term" value="P:ribosome biogenesis"/>
    <property type="evidence" value="ECO:0007669"/>
    <property type="project" value="UniProtKB-UniRule"/>
</dbReference>
<dbReference type="CDD" id="cd01898">
    <property type="entry name" value="Obg"/>
    <property type="match status" value="1"/>
</dbReference>
<dbReference type="FunFam" id="2.70.210.12:FF:000001">
    <property type="entry name" value="GTPase Obg"/>
    <property type="match status" value="1"/>
</dbReference>
<dbReference type="Gene3D" id="2.70.210.12">
    <property type="entry name" value="GTP1/OBG domain"/>
    <property type="match status" value="1"/>
</dbReference>
<dbReference type="Gene3D" id="3.40.50.300">
    <property type="entry name" value="P-loop containing nucleotide triphosphate hydrolases"/>
    <property type="match status" value="1"/>
</dbReference>
<dbReference type="HAMAP" id="MF_01454">
    <property type="entry name" value="GTPase_Obg"/>
    <property type="match status" value="1"/>
</dbReference>
<dbReference type="InterPro" id="IPR031167">
    <property type="entry name" value="G_OBG"/>
</dbReference>
<dbReference type="InterPro" id="IPR006073">
    <property type="entry name" value="GTP-bd"/>
</dbReference>
<dbReference type="InterPro" id="IPR014100">
    <property type="entry name" value="GTP-bd_Obg/CgtA"/>
</dbReference>
<dbReference type="InterPro" id="IPR006074">
    <property type="entry name" value="GTP1-OBG_CS"/>
</dbReference>
<dbReference type="InterPro" id="IPR006169">
    <property type="entry name" value="GTP1_OBG_dom"/>
</dbReference>
<dbReference type="InterPro" id="IPR036726">
    <property type="entry name" value="GTP1_OBG_dom_sf"/>
</dbReference>
<dbReference type="InterPro" id="IPR045086">
    <property type="entry name" value="OBG_GTPase"/>
</dbReference>
<dbReference type="InterPro" id="IPR027417">
    <property type="entry name" value="P-loop_NTPase"/>
</dbReference>
<dbReference type="NCBIfam" id="TIGR02729">
    <property type="entry name" value="Obg_CgtA"/>
    <property type="match status" value="1"/>
</dbReference>
<dbReference type="NCBIfam" id="NF008955">
    <property type="entry name" value="PRK12297.1"/>
    <property type="match status" value="1"/>
</dbReference>
<dbReference type="NCBIfam" id="NF008956">
    <property type="entry name" value="PRK12299.1"/>
    <property type="match status" value="1"/>
</dbReference>
<dbReference type="PANTHER" id="PTHR11702">
    <property type="entry name" value="DEVELOPMENTALLY REGULATED GTP-BINDING PROTEIN-RELATED"/>
    <property type="match status" value="1"/>
</dbReference>
<dbReference type="PANTHER" id="PTHR11702:SF31">
    <property type="entry name" value="MITOCHONDRIAL RIBOSOME-ASSOCIATED GTPASE 2"/>
    <property type="match status" value="1"/>
</dbReference>
<dbReference type="Pfam" id="PF01018">
    <property type="entry name" value="GTP1_OBG"/>
    <property type="match status" value="1"/>
</dbReference>
<dbReference type="Pfam" id="PF01926">
    <property type="entry name" value="MMR_HSR1"/>
    <property type="match status" value="1"/>
</dbReference>
<dbReference type="PIRSF" id="PIRSF002401">
    <property type="entry name" value="GTP_bd_Obg/CgtA"/>
    <property type="match status" value="1"/>
</dbReference>
<dbReference type="PRINTS" id="PR00326">
    <property type="entry name" value="GTP1OBG"/>
</dbReference>
<dbReference type="SUPFAM" id="SSF82051">
    <property type="entry name" value="Obg GTP-binding protein N-terminal domain"/>
    <property type="match status" value="1"/>
</dbReference>
<dbReference type="SUPFAM" id="SSF52540">
    <property type="entry name" value="P-loop containing nucleoside triphosphate hydrolases"/>
    <property type="match status" value="1"/>
</dbReference>
<dbReference type="PROSITE" id="PS51710">
    <property type="entry name" value="G_OBG"/>
    <property type="match status" value="1"/>
</dbReference>
<dbReference type="PROSITE" id="PS00905">
    <property type="entry name" value="GTP1_OBG"/>
    <property type="match status" value="1"/>
</dbReference>
<dbReference type="PROSITE" id="PS51883">
    <property type="entry name" value="OBG"/>
    <property type="match status" value="1"/>
</dbReference>
<keyword id="KW-0963">Cytoplasm</keyword>
<keyword id="KW-0342">GTP-binding</keyword>
<keyword id="KW-0378">Hydrolase</keyword>
<keyword id="KW-0460">Magnesium</keyword>
<keyword id="KW-0479">Metal-binding</keyword>
<keyword id="KW-0547">Nucleotide-binding</keyword>
<gene>
    <name evidence="1" type="primary">obg</name>
    <name type="ordered locus">ABSDF0979</name>
</gene>
<feature type="chain" id="PRO_0000385670" description="GTPase Obg">
    <location>
        <begin position="1"/>
        <end position="406"/>
    </location>
</feature>
<feature type="domain" description="Obg" evidence="2">
    <location>
        <begin position="1"/>
        <end position="159"/>
    </location>
</feature>
<feature type="domain" description="OBG-type G" evidence="1">
    <location>
        <begin position="160"/>
        <end position="333"/>
    </location>
</feature>
<feature type="region of interest" description="Disordered" evidence="3">
    <location>
        <begin position="120"/>
        <end position="143"/>
    </location>
</feature>
<feature type="region of interest" description="Disordered" evidence="3">
    <location>
        <begin position="381"/>
        <end position="406"/>
    </location>
</feature>
<feature type="compositionally biased region" description="Acidic residues" evidence="3">
    <location>
        <begin position="383"/>
        <end position="399"/>
    </location>
</feature>
<feature type="binding site" evidence="1">
    <location>
        <begin position="166"/>
        <end position="173"/>
    </location>
    <ligand>
        <name>GTP</name>
        <dbReference type="ChEBI" id="CHEBI:37565"/>
    </ligand>
</feature>
<feature type="binding site" evidence="1">
    <location>
        <position position="173"/>
    </location>
    <ligand>
        <name>Mg(2+)</name>
        <dbReference type="ChEBI" id="CHEBI:18420"/>
    </ligand>
</feature>
<feature type="binding site" evidence="1">
    <location>
        <begin position="191"/>
        <end position="195"/>
    </location>
    <ligand>
        <name>GTP</name>
        <dbReference type="ChEBI" id="CHEBI:37565"/>
    </ligand>
</feature>
<feature type="binding site" evidence="1">
    <location>
        <position position="193"/>
    </location>
    <ligand>
        <name>Mg(2+)</name>
        <dbReference type="ChEBI" id="CHEBI:18420"/>
    </ligand>
</feature>
<feature type="binding site" evidence="1">
    <location>
        <begin position="213"/>
        <end position="216"/>
    </location>
    <ligand>
        <name>GTP</name>
        <dbReference type="ChEBI" id="CHEBI:37565"/>
    </ligand>
</feature>
<feature type="binding site" evidence="1">
    <location>
        <begin position="283"/>
        <end position="286"/>
    </location>
    <ligand>
        <name>GTP</name>
        <dbReference type="ChEBI" id="CHEBI:37565"/>
    </ligand>
</feature>
<feature type="binding site" evidence="1">
    <location>
        <begin position="314"/>
        <end position="316"/>
    </location>
    <ligand>
        <name>GTP</name>
        <dbReference type="ChEBI" id="CHEBI:37565"/>
    </ligand>
</feature>
<sequence>MRFVDEAVITVEAGDGGNGVASFRREKFVPFGGPDGGDGGRGGSIYIQADDDTSTLVDYRYTRKLRAERGKNGAGANCTGRGGEDVVLKVPVGTTIVDTDSGDIIGDLVEDGQRVMVASGGEGGLGNTHFKSSTNRAPRKCTTGTKGEFREIRLELKVLADVGLLGMPNAGKSTFIRAVSAAKPKVADYPFTTMVPNLGVVDADRHRSFVMADIPGLIEGAAEGAGLGIRFLKHLARTRILLHIIDVQPIDGSDPAHNAKAIMNELAKFSPTLANLPIVLVLNKLDQIAEESREEWCQHILDELQWTGPVFKTSGLLEEGTKEVVYYLMDQIEQQREREVEDPEYAAEVRAFREQLEAETREQTIAAKEAYRAMRKAQRLESMMDDDDDFDDDEDDGDVESIYVRD</sequence>
<accession>B0VTQ1</accession>
<comment type="function">
    <text evidence="1">An essential GTPase which binds GTP, GDP and possibly (p)ppGpp with moderate affinity, with high nucleotide exchange rates and a fairly low GTP hydrolysis rate. Plays a role in control of the cell cycle, stress response, ribosome biogenesis and in those bacteria that undergo differentiation, in morphogenesis control.</text>
</comment>
<comment type="cofactor">
    <cofactor evidence="1">
        <name>Mg(2+)</name>
        <dbReference type="ChEBI" id="CHEBI:18420"/>
    </cofactor>
</comment>
<comment type="subunit">
    <text evidence="1">Monomer.</text>
</comment>
<comment type="subcellular location">
    <subcellularLocation>
        <location evidence="1">Cytoplasm</location>
    </subcellularLocation>
</comment>
<comment type="similarity">
    <text evidence="1">Belongs to the TRAFAC class OBG-HflX-like GTPase superfamily. OBG GTPase family.</text>
</comment>
<reference key="1">
    <citation type="journal article" date="2008" name="PLoS ONE">
        <title>Comparative analysis of Acinetobacters: three genomes for three lifestyles.</title>
        <authorList>
            <person name="Vallenet D."/>
            <person name="Nordmann P."/>
            <person name="Barbe V."/>
            <person name="Poirel L."/>
            <person name="Mangenot S."/>
            <person name="Bataille E."/>
            <person name="Dossat C."/>
            <person name="Gas S."/>
            <person name="Kreimeyer A."/>
            <person name="Lenoble P."/>
            <person name="Oztas S."/>
            <person name="Poulain J."/>
            <person name="Segurens B."/>
            <person name="Robert C."/>
            <person name="Abergel C."/>
            <person name="Claverie J.-M."/>
            <person name="Raoult D."/>
            <person name="Medigue C."/>
            <person name="Weissenbach J."/>
            <person name="Cruveiller S."/>
        </authorList>
    </citation>
    <scope>NUCLEOTIDE SEQUENCE [LARGE SCALE GENOMIC DNA]</scope>
    <source>
        <strain>SDF</strain>
    </source>
</reference>
<organism>
    <name type="scientific">Acinetobacter baumannii (strain SDF)</name>
    <dbReference type="NCBI Taxonomy" id="509170"/>
    <lineage>
        <taxon>Bacteria</taxon>
        <taxon>Pseudomonadati</taxon>
        <taxon>Pseudomonadota</taxon>
        <taxon>Gammaproteobacteria</taxon>
        <taxon>Moraxellales</taxon>
        <taxon>Moraxellaceae</taxon>
        <taxon>Acinetobacter</taxon>
        <taxon>Acinetobacter calcoaceticus/baumannii complex</taxon>
    </lineage>
</organism>